<proteinExistence type="inferred from homology"/>
<protein>
    <recommendedName>
        <fullName evidence="1">LexA repressor</fullName>
        <ecNumber evidence="1">3.4.21.88</ecNumber>
    </recommendedName>
</protein>
<organism>
    <name type="scientific">Oceanobacillus iheyensis (strain DSM 14371 / CIP 107618 / JCM 11309 / KCTC 3954 / HTE831)</name>
    <dbReference type="NCBI Taxonomy" id="221109"/>
    <lineage>
        <taxon>Bacteria</taxon>
        <taxon>Bacillati</taxon>
        <taxon>Bacillota</taxon>
        <taxon>Bacilli</taxon>
        <taxon>Bacillales</taxon>
        <taxon>Bacillaceae</taxon>
        <taxon>Oceanobacillus</taxon>
    </lineage>
</organism>
<evidence type="ECO:0000255" key="1">
    <source>
        <dbReference type="HAMAP-Rule" id="MF_00015"/>
    </source>
</evidence>
<name>LEXA_OCEIH</name>
<accession>Q8EQM5</accession>
<feature type="chain" id="PRO_0000170062" description="LexA repressor">
    <location>
        <begin position="1"/>
        <end position="207"/>
    </location>
</feature>
<feature type="DNA-binding region" description="H-T-H motif" evidence="1">
    <location>
        <begin position="28"/>
        <end position="48"/>
    </location>
</feature>
<feature type="active site" description="For autocatalytic cleavage activity" evidence="1">
    <location>
        <position position="129"/>
    </location>
</feature>
<feature type="active site" description="For autocatalytic cleavage activity" evidence="1">
    <location>
        <position position="167"/>
    </location>
</feature>
<feature type="site" description="Cleavage; by autolysis" evidence="1">
    <location>
        <begin position="93"/>
        <end position="94"/>
    </location>
</feature>
<sequence length="207" mass="23093">MTKLSKRQQMIFDFIKSEVKLKGYPPSVREIAVAVGLASSSTVHGHLERLENKGYIRRDPTKPRAIEIIDLEMEQQLPKDEARYAPVIGKVTAGIPITAVENIEEFVPIPSSSAGPDDNVFVLVIDGESMIEAGILDGDMVIVKQQNTAVNGEIVVAMTEENEATVKRFFKEENRIRLQPENATMEPLFYDNVTILGKVIGLYRNIH</sequence>
<gene>
    <name evidence="1" type="primary">lexA</name>
    <name type="ordered locus">OB1669</name>
</gene>
<comment type="function">
    <text evidence="1">Represses a number of genes involved in the response to DNA damage (SOS response), including recA and lexA. In the presence of single-stranded DNA, RecA interacts with LexA causing an autocatalytic cleavage which disrupts the DNA-binding part of LexA, leading to derepression of the SOS regulon and eventually DNA repair.</text>
</comment>
<comment type="catalytic activity">
    <reaction evidence="1">
        <text>Hydrolysis of Ala-|-Gly bond in repressor LexA.</text>
        <dbReference type="EC" id="3.4.21.88"/>
    </reaction>
</comment>
<comment type="subunit">
    <text evidence="1">Homodimer.</text>
</comment>
<comment type="similarity">
    <text evidence="1">Belongs to the peptidase S24 family.</text>
</comment>
<dbReference type="EC" id="3.4.21.88" evidence="1"/>
<dbReference type="EMBL" id="BA000028">
    <property type="protein sequence ID" value="BAC13625.1"/>
    <property type="molecule type" value="Genomic_DNA"/>
</dbReference>
<dbReference type="RefSeq" id="WP_011066070.1">
    <property type="nucleotide sequence ID" value="NC_004193.1"/>
</dbReference>
<dbReference type="SMR" id="Q8EQM5"/>
<dbReference type="STRING" id="221109.gene:10733909"/>
<dbReference type="MEROPS" id="S24.001"/>
<dbReference type="KEGG" id="oih:OB1669"/>
<dbReference type="eggNOG" id="COG1974">
    <property type="taxonomic scope" value="Bacteria"/>
</dbReference>
<dbReference type="HOGENOM" id="CLU_066192_45_1_9"/>
<dbReference type="OrthoDB" id="9802364at2"/>
<dbReference type="PhylomeDB" id="Q8EQM5"/>
<dbReference type="Proteomes" id="UP000000822">
    <property type="component" value="Chromosome"/>
</dbReference>
<dbReference type="GO" id="GO:0003677">
    <property type="term" value="F:DNA binding"/>
    <property type="evidence" value="ECO:0007669"/>
    <property type="project" value="UniProtKB-UniRule"/>
</dbReference>
<dbReference type="GO" id="GO:0004252">
    <property type="term" value="F:serine-type endopeptidase activity"/>
    <property type="evidence" value="ECO:0007669"/>
    <property type="project" value="UniProtKB-UniRule"/>
</dbReference>
<dbReference type="GO" id="GO:0006281">
    <property type="term" value="P:DNA repair"/>
    <property type="evidence" value="ECO:0007669"/>
    <property type="project" value="UniProtKB-UniRule"/>
</dbReference>
<dbReference type="GO" id="GO:0006260">
    <property type="term" value="P:DNA replication"/>
    <property type="evidence" value="ECO:0007669"/>
    <property type="project" value="UniProtKB-UniRule"/>
</dbReference>
<dbReference type="GO" id="GO:0045892">
    <property type="term" value="P:negative regulation of DNA-templated transcription"/>
    <property type="evidence" value="ECO:0007669"/>
    <property type="project" value="UniProtKB-UniRule"/>
</dbReference>
<dbReference type="GO" id="GO:0006508">
    <property type="term" value="P:proteolysis"/>
    <property type="evidence" value="ECO:0007669"/>
    <property type="project" value="InterPro"/>
</dbReference>
<dbReference type="GO" id="GO:0009432">
    <property type="term" value="P:SOS response"/>
    <property type="evidence" value="ECO:0007669"/>
    <property type="project" value="UniProtKB-UniRule"/>
</dbReference>
<dbReference type="CDD" id="cd00090">
    <property type="entry name" value="HTH_ARSR"/>
    <property type="match status" value="1"/>
</dbReference>
<dbReference type="CDD" id="cd06529">
    <property type="entry name" value="S24_LexA-like"/>
    <property type="match status" value="1"/>
</dbReference>
<dbReference type="FunFam" id="1.10.10.10:FF:000009">
    <property type="entry name" value="LexA repressor"/>
    <property type="match status" value="1"/>
</dbReference>
<dbReference type="FunFam" id="2.10.109.10:FF:000001">
    <property type="entry name" value="LexA repressor"/>
    <property type="match status" value="1"/>
</dbReference>
<dbReference type="Gene3D" id="2.10.109.10">
    <property type="entry name" value="Umud Fragment, subunit A"/>
    <property type="match status" value="1"/>
</dbReference>
<dbReference type="Gene3D" id="1.10.10.10">
    <property type="entry name" value="Winged helix-like DNA-binding domain superfamily/Winged helix DNA-binding domain"/>
    <property type="match status" value="1"/>
</dbReference>
<dbReference type="HAMAP" id="MF_00015">
    <property type="entry name" value="LexA"/>
    <property type="match status" value="1"/>
</dbReference>
<dbReference type="InterPro" id="IPR011991">
    <property type="entry name" value="ArsR-like_HTH"/>
</dbReference>
<dbReference type="InterPro" id="IPR006200">
    <property type="entry name" value="LexA"/>
</dbReference>
<dbReference type="InterPro" id="IPR039418">
    <property type="entry name" value="LexA-like"/>
</dbReference>
<dbReference type="InterPro" id="IPR036286">
    <property type="entry name" value="LexA/Signal_pep-like_sf"/>
</dbReference>
<dbReference type="InterPro" id="IPR006199">
    <property type="entry name" value="LexA_DNA-bd_dom"/>
</dbReference>
<dbReference type="InterPro" id="IPR050077">
    <property type="entry name" value="LexA_repressor"/>
</dbReference>
<dbReference type="InterPro" id="IPR006197">
    <property type="entry name" value="Peptidase_S24_LexA"/>
</dbReference>
<dbReference type="InterPro" id="IPR015927">
    <property type="entry name" value="Peptidase_S24_S26A/B/C"/>
</dbReference>
<dbReference type="InterPro" id="IPR036388">
    <property type="entry name" value="WH-like_DNA-bd_sf"/>
</dbReference>
<dbReference type="InterPro" id="IPR036390">
    <property type="entry name" value="WH_DNA-bd_sf"/>
</dbReference>
<dbReference type="NCBIfam" id="TIGR00498">
    <property type="entry name" value="lexA"/>
    <property type="match status" value="1"/>
</dbReference>
<dbReference type="PANTHER" id="PTHR33516">
    <property type="entry name" value="LEXA REPRESSOR"/>
    <property type="match status" value="1"/>
</dbReference>
<dbReference type="PANTHER" id="PTHR33516:SF2">
    <property type="entry name" value="LEXA REPRESSOR-RELATED"/>
    <property type="match status" value="1"/>
</dbReference>
<dbReference type="Pfam" id="PF01726">
    <property type="entry name" value="LexA_DNA_bind"/>
    <property type="match status" value="1"/>
</dbReference>
<dbReference type="Pfam" id="PF00717">
    <property type="entry name" value="Peptidase_S24"/>
    <property type="match status" value="1"/>
</dbReference>
<dbReference type="PRINTS" id="PR00726">
    <property type="entry name" value="LEXASERPTASE"/>
</dbReference>
<dbReference type="SUPFAM" id="SSF51306">
    <property type="entry name" value="LexA/Signal peptidase"/>
    <property type="match status" value="1"/>
</dbReference>
<dbReference type="SUPFAM" id="SSF46785">
    <property type="entry name" value="Winged helix' DNA-binding domain"/>
    <property type="match status" value="1"/>
</dbReference>
<reference key="1">
    <citation type="journal article" date="2002" name="Nucleic Acids Res.">
        <title>Genome sequence of Oceanobacillus iheyensis isolated from the Iheya Ridge and its unexpected adaptive capabilities to extreme environments.</title>
        <authorList>
            <person name="Takami H."/>
            <person name="Takaki Y."/>
            <person name="Uchiyama I."/>
        </authorList>
    </citation>
    <scope>NUCLEOTIDE SEQUENCE [LARGE SCALE GENOMIC DNA]</scope>
    <source>
        <strain>DSM 14371 / CIP 107618 / JCM 11309 / KCTC 3954 / HTE831</strain>
    </source>
</reference>
<keyword id="KW-0068">Autocatalytic cleavage</keyword>
<keyword id="KW-0227">DNA damage</keyword>
<keyword id="KW-0234">DNA repair</keyword>
<keyword id="KW-0235">DNA replication</keyword>
<keyword id="KW-0238">DNA-binding</keyword>
<keyword id="KW-0378">Hydrolase</keyword>
<keyword id="KW-1185">Reference proteome</keyword>
<keyword id="KW-0678">Repressor</keyword>
<keyword id="KW-0742">SOS response</keyword>
<keyword id="KW-0804">Transcription</keyword>
<keyword id="KW-0805">Transcription regulation</keyword>